<reference key="1">
    <citation type="journal article" date="1997" name="Proc. Natl. Acad. Sci. U.S.A.">
        <title>The complete mitochondrial genome of the wallaroo (Macropus robustus) and the phylogenetic relationship among Monotremata, Marsupialia, and Eutheria.</title>
        <authorList>
            <person name="Janke A."/>
            <person name="Xu X."/>
            <person name="Arnason U."/>
        </authorList>
    </citation>
    <scope>NUCLEOTIDE SEQUENCE [GENOMIC DNA]</scope>
</reference>
<name>ATP8_OSPRO</name>
<proteinExistence type="inferred from homology"/>
<dbReference type="EMBL" id="Y10524">
    <property type="protein sequence ID" value="CAA71540.1"/>
    <property type="molecule type" value="Genomic_DNA"/>
</dbReference>
<dbReference type="PIR" id="T11432">
    <property type="entry name" value="T11432"/>
</dbReference>
<dbReference type="RefSeq" id="NP_007398.1">
    <property type="nucleotide sequence ID" value="NC_001794.1"/>
</dbReference>
<dbReference type="SMR" id="P92663"/>
<dbReference type="GeneID" id="808075"/>
<dbReference type="CTD" id="4509"/>
<dbReference type="GO" id="GO:0031966">
    <property type="term" value="C:mitochondrial membrane"/>
    <property type="evidence" value="ECO:0007669"/>
    <property type="project" value="UniProtKB-SubCell"/>
</dbReference>
<dbReference type="GO" id="GO:0045259">
    <property type="term" value="C:proton-transporting ATP synthase complex"/>
    <property type="evidence" value="ECO:0000250"/>
    <property type="project" value="UniProtKB"/>
</dbReference>
<dbReference type="GO" id="GO:0015078">
    <property type="term" value="F:proton transmembrane transporter activity"/>
    <property type="evidence" value="ECO:0007669"/>
    <property type="project" value="InterPro"/>
</dbReference>
<dbReference type="GO" id="GO:0015986">
    <property type="term" value="P:proton motive force-driven ATP synthesis"/>
    <property type="evidence" value="ECO:0007669"/>
    <property type="project" value="InterPro"/>
</dbReference>
<dbReference type="InterPro" id="IPR039017">
    <property type="entry name" value="ATP8_mammal"/>
</dbReference>
<dbReference type="InterPro" id="IPR001421">
    <property type="entry name" value="ATP8_metazoa"/>
</dbReference>
<dbReference type="PANTHER" id="PTHR13722">
    <property type="entry name" value="ATP SYNTHASE PROTEIN 8"/>
    <property type="match status" value="1"/>
</dbReference>
<dbReference type="PANTHER" id="PTHR13722:SF0">
    <property type="entry name" value="ATP SYNTHASE PROTEIN 8"/>
    <property type="match status" value="1"/>
</dbReference>
<dbReference type="Pfam" id="PF00895">
    <property type="entry name" value="ATP-synt_8"/>
    <property type="match status" value="1"/>
</dbReference>
<keyword id="KW-0007">Acetylation</keyword>
<keyword id="KW-0066">ATP synthesis</keyword>
<keyword id="KW-0138">CF(0)</keyword>
<keyword id="KW-0375">Hydrogen ion transport</keyword>
<keyword id="KW-0406">Ion transport</keyword>
<keyword id="KW-0472">Membrane</keyword>
<keyword id="KW-0496">Mitochondrion</keyword>
<keyword id="KW-0812">Transmembrane</keyword>
<keyword id="KW-1133">Transmembrane helix</keyword>
<keyword id="KW-0813">Transport</keyword>
<gene>
    <name evidence="1" type="primary">MT-ATP8</name>
    <name type="synonym">ATP8</name>
    <name type="synonym">ATPASE8</name>
    <name type="synonym">MTATP8</name>
</gene>
<protein>
    <recommendedName>
        <fullName evidence="1">ATP synthase F(0) complex subunit 8</fullName>
    </recommendedName>
    <alternativeName>
        <fullName>A6L</fullName>
    </alternativeName>
    <alternativeName>
        <fullName>F-ATPase subunit 8</fullName>
    </alternativeName>
</protein>
<feature type="chain" id="PRO_0000195548" description="ATP synthase F(0) complex subunit 8">
    <location>
        <begin position="1"/>
        <end position="69"/>
    </location>
</feature>
<feature type="transmembrane region" description="Helical" evidence="4">
    <location>
        <begin position="8"/>
        <end position="24"/>
    </location>
</feature>
<feature type="modified residue" description="N6-acetyllysine; alternate" evidence="2">
    <location>
        <position position="55"/>
    </location>
</feature>
<feature type="modified residue" description="N6-succinyllysine; alternate" evidence="2">
    <location>
        <position position="55"/>
    </location>
</feature>
<feature type="modified residue" description="N6-acetyllysine" evidence="2">
    <location>
        <position position="58"/>
    </location>
</feature>
<comment type="function">
    <text evidence="1 3">Subunit 8, of the mitochondrial membrane ATP synthase complex (F(1)F(0) ATP synthase or Complex V) that produces ATP from ADP in the presence of a proton gradient across the membrane which is generated by electron transport complexes of the respiratory chain. ATP synthase complex consist of a soluble F(1) head domain - the catalytic core - and a membrane F(1) domain - the membrane proton channel. These two domains are linked by a central stalk rotating inside the F(1) region and a stationary peripheral stalk. During catalysis, ATP synthesis in the catalytic domain of F(1) is coupled via a rotary mechanism of the central stalk subunits to proton translocation (By similarity). In vivo, can only synthesize ATP although its ATP hydrolase activity can be activated artificially in vitro (By similarity). Part of the complex F(0) domain (By similarity).</text>
</comment>
<comment type="subunit">
    <text evidence="1">Component of the ATP synthase complex composed at least of ATP5F1A/subunit alpha, ATP5F1B/subunit beta, ATP5MC1/subunit c (homooctomer), MT-ATP6/subunit a, MT-ATP8/subunit 8, ATP5ME/subunit e, ATP5MF/subunit f, ATP5MG/subunit g, ATP5MK/subunit k, ATP5MJ/subunit j, ATP5F1C/subunit gamma, ATP5F1D/subunit delta, ATP5F1E/subunit epsilon, ATP5PF/subunit F6, ATP5PB/subunit b, ATP5PD/subunit d, ATP5PO/subunit OSCP. ATP synthase complex consists of a soluble F(1) head domain (subunits alpha(3) and beta(3)) - the catalytic core - and a membrane F(0) domain - the membrane proton channel (subunits c, a, 8, e, f, g, k and j). These two domains are linked by a central stalk (subunits gamma, delta, and epsilon) rotating inside the F1 region and a stationary peripheral stalk (subunits F6, b, d, and OSCP). Interacts with PRICKLE3.</text>
</comment>
<comment type="subcellular location">
    <subcellularLocation>
        <location>Mitochondrion membrane</location>
        <topology>Single-pass membrane protein</topology>
    </subcellularLocation>
</comment>
<comment type="similarity">
    <text evidence="5">Belongs to the ATPase protein 8 family.</text>
</comment>
<sequence length="69" mass="8004">MPQLDTSTWLLTITLMILALFCIYQSKMINQTMISIPPQDKKVIKPTTQLPWESKWTKIYLPHSSPLLS</sequence>
<geneLocation type="mitochondrion"/>
<accession>P92663</accession>
<evidence type="ECO:0000250" key="1">
    <source>
        <dbReference type="UniProtKB" id="P03928"/>
    </source>
</evidence>
<evidence type="ECO:0000250" key="2">
    <source>
        <dbReference type="UniProtKB" id="P03930"/>
    </source>
</evidence>
<evidence type="ECO:0000250" key="3">
    <source>
        <dbReference type="UniProtKB" id="P19483"/>
    </source>
</evidence>
<evidence type="ECO:0000255" key="4"/>
<evidence type="ECO:0000305" key="5"/>
<organism>
    <name type="scientific">Osphranter robustus</name>
    <name type="common">Wallaroo</name>
    <name type="synonym">Macropus robustus</name>
    <dbReference type="NCBI Taxonomy" id="9319"/>
    <lineage>
        <taxon>Eukaryota</taxon>
        <taxon>Metazoa</taxon>
        <taxon>Chordata</taxon>
        <taxon>Craniata</taxon>
        <taxon>Vertebrata</taxon>
        <taxon>Euteleostomi</taxon>
        <taxon>Mammalia</taxon>
        <taxon>Metatheria</taxon>
        <taxon>Diprotodontia</taxon>
        <taxon>Macropodidae</taxon>
        <taxon>Osphranter</taxon>
    </lineage>
</organism>